<proteinExistence type="evidence at protein level"/>
<evidence type="ECO:0000255" key="1"/>
<evidence type="ECO:0000255" key="2">
    <source>
        <dbReference type="PROSITE-ProRule" id="PRU01098"/>
    </source>
</evidence>
<evidence type="ECO:0000255" key="3">
    <source>
        <dbReference type="PROSITE-ProRule" id="PRU10064"/>
    </source>
</evidence>
<evidence type="ECO:0000305" key="4"/>
<organism>
    <name type="scientific">Brevibacillus brevis</name>
    <name type="common">Bacillus brevis</name>
    <dbReference type="NCBI Taxonomy" id="1393"/>
    <lineage>
        <taxon>Bacteria</taxon>
        <taxon>Bacillati</taxon>
        <taxon>Bacillota</taxon>
        <taxon>Bacilli</taxon>
        <taxon>Bacillales</taxon>
        <taxon>Paenibacillaceae</taxon>
        <taxon>Brevibacillus</taxon>
    </lineage>
</organism>
<protein>
    <recommendedName>
        <fullName>Beta-glucanase</fullName>
        <ecNumber>3.2.1.73</ecNumber>
    </recommendedName>
    <alternativeName>
        <fullName>1,3-1,4-beta-D-glucan 4-glucanohydrolase</fullName>
    </alternativeName>
    <alternativeName>
        <fullName>Endo-beta-1,3-1,4 glucanase</fullName>
    </alternativeName>
    <alternativeName>
        <fullName>Lichenase</fullName>
    </alternativeName>
</protein>
<comment type="function">
    <text>Hydrolyzes B-glucans containing mixed beta-1,3 and beta-1,4 linkages.</text>
</comment>
<comment type="catalytic activity">
    <reaction>
        <text>Hydrolysis of (1-&gt;4)-beta-D-glucosidic linkages in beta-D-glucans containing (1-&gt;3)- and (1-&gt;4)-bonds.</text>
        <dbReference type="EC" id="3.2.1.73"/>
    </reaction>
</comment>
<comment type="biophysicochemical properties">
    <temperatureDependence>
        <text>Optimum temperature is 65-70 degrees Celsius. Thermostable.</text>
    </temperatureDependence>
</comment>
<comment type="miscellaneous">
    <text>Beta-glucanases of Bacillus have a substrate range similar to lichenase of germinating barley.</text>
</comment>
<comment type="similarity">
    <text evidence="4">Belongs to the glycosyl hydrolase 16 family.</text>
</comment>
<keyword id="KW-0326">Glycosidase</keyword>
<keyword id="KW-0378">Hydrolase</keyword>
<keyword id="KW-0732">Signal</keyword>
<reference key="1">
    <citation type="journal article" date="1993" name="Appl. Microbiol. Biotechnol.">
        <title>Characterization, cloning and sequencing of a thermostable endo-(1,3-1,4) beta-glucanase-encoding gene from an alkalophilic Bacillus brevis.</title>
        <authorList>
            <person name="Louw M.E."/>
            <person name="Reid S.J."/>
            <person name="Watson T.G."/>
        </authorList>
    </citation>
    <scope>NUCLEOTIDE SEQUENCE [GENOMIC DNA]</scope>
    <source>
        <strain>Alk36</strain>
    </source>
</reference>
<feature type="signal peptide" evidence="1">
    <location>
        <begin position="1"/>
        <end position="31"/>
    </location>
</feature>
<feature type="chain" id="PRO_0000011787" description="Beta-glucanase">
    <location>
        <begin position="32"/>
        <end position="259"/>
    </location>
</feature>
<feature type="domain" description="GH16" evidence="2">
    <location>
        <begin position="35"/>
        <end position="255"/>
    </location>
</feature>
<feature type="active site" description="Nucleophile" evidence="3">
    <location>
        <position position="142"/>
    </location>
</feature>
<feature type="active site" description="Proton donor" evidence="3">
    <location>
        <position position="146"/>
    </location>
</feature>
<name>GUB_BREBE</name>
<accession>P37073</accession>
<dbReference type="EC" id="3.2.1.73"/>
<dbReference type="EMBL" id="M84339">
    <property type="protein sequence ID" value="AAA22265.1"/>
    <property type="molecule type" value="Genomic_DNA"/>
</dbReference>
<dbReference type="PIR" id="A48378">
    <property type="entry name" value="A48378"/>
</dbReference>
<dbReference type="SMR" id="P37073"/>
<dbReference type="CAZy" id="GH16">
    <property type="family name" value="Glycoside Hydrolase Family 16"/>
</dbReference>
<dbReference type="BRENDA" id="3.2.1.73">
    <property type="organism ID" value="638"/>
</dbReference>
<dbReference type="GO" id="GO:0042972">
    <property type="term" value="F:licheninase activity"/>
    <property type="evidence" value="ECO:0007669"/>
    <property type="project" value="UniProtKB-EC"/>
</dbReference>
<dbReference type="GO" id="GO:0005975">
    <property type="term" value="P:carbohydrate metabolic process"/>
    <property type="evidence" value="ECO:0007669"/>
    <property type="project" value="InterPro"/>
</dbReference>
<dbReference type="CDD" id="cd02175">
    <property type="entry name" value="GH16_lichenase"/>
    <property type="match status" value="1"/>
</dbReference>
<dbReference type="Gene3D" id="2.60.120.200">
    <property type="match status" value="1"/>
</dbReference>
<dbReference type="InterPro" id="IPR044791">
    <property type="entry name" value="Beta-glucanase/XTH"/>
</dbReference>
<dbReference type="InterPro" id="IPR008264">
    <property type="entry name" value="Beta_glucanase"/>
</dbReference>
<dbReference type="InterPro" id="IPR013320">
    <property type="entry name" value="ConA-like_dom_sf"/>
</dbReference>
<dbReference type="InterPro" id="IPR000757">
    <property type="entry name" value="GH16"/>
</dbReference>
<dbReference type="InterPro" id="IPR008263">
    <property type="entry name" value="GH16_AS"/>
</dbReference>
<dbReference type="NCBIfam" id="NF047856">
    <property type="entry name" value="BGlucanaseBglS"/>
    <property type="match status" value="1"/>
</dbReference>
<dbReference type="PANTHER" id="PTHR31062">
    <property type="entry name" value="XYLOGLUCAN ENDOTRANSGLUCOSYLASE/HYDROLASE PROTEIN 8-RELATED"/>
    <property type="match status" value="1"/>
</dbReference>
<dbReference type="Pfam" id="PF00722">
    <property type="entry name" value="Glyco_hydro_16"/>
    <property type="match status" value="1"/>
</dbReference>
<dbReference type="PRINTS" id="PR00737">
    <property type="entry name" value="GLHYDRLASE16"/>
</dbReference>
<dbReference type="SUPFAM" id="SSF49899">
    <property type="entry name" value="Concanavalin A-like lectins/glucanases"/>
    <property type="match status" value="1"/>
</dbReference>
<dbReference type="PROSITE" id="PS01034">
    <property type="entry name" value="GH16_1"/>
    <property type="match status" value="1"/>
</dbReference>
<dbReference type="PROSITE" id="PS51762">
    <property type="entry name" value="GH16_2"/>
    <property type="match status" value="1"/>
</dbReference>
<sequence>MVKSKYLVFISVFSLLFGVFVVGFSHQGVKAEEERPMGTAFYESFDAFDDERWSKAGVWTNGQMFNATWYPEQVTADGLMRLTIAKKTTSARNYKAGELRTNDFYHYGLFEVSMKPAKVEGTVSSFFTYTGEWDWDGDPWDEIDIEFLGKDTTRIQFNYFTNGVGGNEFYYDLGFDASESFNTYAFEWREDSITWYVNGEAVHTATENIPQTPQKIMMNLWPGVGVDGWTGVFDGDNTPVYSYYDWVRYTPLQNYQIHQ</sequence>
<gene>
    <name type="primary">bglBB</name>
</gene>